<organism>
    <name type="scientific">Acorus calamus</name>
    <name type="common">Sweet flag</name>
    <dbReference type="NCBI Taxonomy" id="4465"/>
    <lineage>
        <taxon>Eukaryota</taxon>
        <taxon>Viridiplantae</taxon>
        <taxon>Streptophyta</taxon>
        <taxon>Embryophyta</taxon>
        <taxon>Tracheophyta</taxon>
        <taxon>Spermatophyta</taxon>
        <taxon>Magnoliopsida</taxon>
        <taxon>Liliopsida</taxon>
        <taxon>Acoraceae</taxon>
        <taxon>Acorus</taxon>
    </lineage>
</organism>
<keyword id="KW-0150">Chloroplast</keyword>
<keyword id="KW-0934">Plastid</keyword>
<keyword id="KW-0687">Ribonucleoprotein</keyword>
<keyword id="KW-0689">Ribosomal protein</keyword>
<keyword id="KW-0694">RNA-binding</keyword>
<keyword id="KW-0699">rRNA-binding</keyword>
<accession>Q3V4Z7</accession>
<protein>
    <recommendedName>
        <fullName evidence="1">Large ribosomal subunit protein uL14c</fullName>
    </recommendedName>
    <alternativeName>
        <fullName evidence="2">50S ribosomal protein L14, chloroplastic</fullName>
    </alternativeName>
</protein>
<sequence>MIQPQTLLNVADNSGARELMCIRIIGASNRRYAHIGDVIVAVIKEAVPNMSLERSEVVRAVIVRTCKELKRDNGMIIRYDDNAAVVIDQEGNPKGTRVFGAIARELRHLNFTKIVSLAPEVL</sequence>
<feature type="chain" id="PRO_0000355855" description="Large ribosomal subunit protein uL14c">
    <location>
        <begin position="1"/>
        <end position="122"/>
    </location>
</feature>
<name>RK14_ACOCL</name>
<geneLocation type="chloroplast"/>
<evidence type="ECO:0000255" key="1">
    <source>
        <dbReference type="HAMAP-Rule" id="MF_01367"/>
    </source>
</evidence>
<evidence type="ECO:0000305" key="2"/>
<gene>
    <name evidence="1" type="primary">rpl14</name>
</gene>
<dbReference type="EMBL" id="AJ879453">
    <property type="protein sequence ID" value="CAI53831.1"/>
    <property type="molecule type" value="Genomic_DNA"/>
</dbReference>
<dbReference type="RefSeq" id="YP_319800.1">
    <property type="nucleotide sequence ID" value="NC_007407.1"/>
</dbReference>
<dbReference type="SMR" id="Q3V4Z7"/>
<dbReference type="GeneID" id="3677477"/>
<dbReference type="GO" id="GO:0009507">
    <property type="term" value="C:chloroplast"/>
    <property type="evidence" value="ECO:0007669"/>
    <property type="project" value="UniProtKB-SubCell"/>
</dbReference>
<dbReference type="GO" id="GO:0022625">
    <property type="term" value="C:cytosolic large ribosomal subunit"/>
    <property type="evidence" value="ECO:0007669"/>
    <property type="project" value="TreeGrafter"/>
</dbReference>
<dbReference type="GO" id="GO:0070180">
    <property type="term" value="F:large ribosomal subunit rRNA binding"/>
    <property type="evidence" value="ECO:0007669"/>
    <property type="project" value="TreeGrafter"/>
</dbReference>
<dbReference type="GO" id="GO:0003735">
    <property type="term" value="F:structural constituent of ribosome"/>
    <property type="evidence" value="ECO:0007669"/>
    <property type="project" value="InterPro"/>
</dbReference>
<dbReference type="GO" id="GO:0006412">
    <property type="term" value="P:translation"/>
    <property type="evidence" value="ECO:0007669"/>
    <property type="project" value="UniProtKB-UniRule"/>
</dbReference>
<dbReference type="CDD" id="cd00337">
    <property type="entry name" value="Ribosomal_uL14"/>
    <property type="match status" value="1"/>
</dbReference>
<dbReference type="FunFam" id="2.40.150.20:FF:000002">
    <property type="entry name" value="50S ribosomal protein L14, chloroplastic"/>
    <property type="match status" value="1"/>
</dbReference>
<dbReference type="Gene3D" id="2.40.150.20">
    <property type="entry name" value="Ribosomal protein L14"/>
    <property type="match status" value="1"/>
</dbReference>
<dbReference type="HAMAP" id="MF_01367">
    <property type="entry name" value="Ribosomal_uL14"/>
    <property type="match status" value="1"/>
</dbReference>
<dbReference type="InterPro" id="IPR000218">
    <property type="entry name" value="Ribosomal_uL14"/>
</dbReference>
<dbReference type="InterPro" id="IPR005745">
    <property type="entry name" value="Ribosomal_uL14_bac-type"/>
</dbReference>
<dbReference type="InterPro" id="IPR019972">
    <property type="entry name" value="Ribosomal_uL14_CS"/>
</dbReference>
<dbReference type="InterPro" id="IPR036853">
    <property type="entry name" value="Ribosomal_uL14_sf"/>
</dbReference>
<dbReference type="NCBIfam" id="TIGR01067">
    <property type="entry name" value="rplN_bact"/>
    <property type="match status" value="1"/>
</dbReference>
<dbReference type="PANTHER" id="PTHR11761">
    <property type="entry name" value="50S/60S RIBOSOMAL PROTEIN L14/L23"/>
    <property type="match status" value="1"/>
</dbReference>
<dbReference type="PANTHER" id="PTHR11761:SF3">
    <property type="entry name" value="LARGE RIBOSOMAL SUBUNIT PROTEIN UL14M"/>
    <property type="match status" value="1"/>
</dbReference>
<dbReference type="Pfam" id="PF00238">
    <property type="entry name" value="Ribosomal_L14"/>
    <property type="match status" value="1"/>
</dbReference>
<dbReference type="SMART" id="SM01374">
    <property type="entry name" value="Ribosomal_L14"/>
    <property type="match status" value="1"/>
</dbReference>
<dbReference type="SUPFAM" id="SSF50193">
    <property type="entry name" value="Ribosomal protein L14"/>
    <property type="match status" value="1"/>
</dbReference>
<dbReference type="PROSITE" id="PS00049">
    <property type="entry name" value="RIBOSOMAL_L14"/>
    <property type="match status" value="1"/>
</dbReference>
<reference key="1">
    <citation type="journal article" date="2005" name="Mol. Biol. Evol.">
        <title>Analysis of Acorus calamus chloroplast genome and its phylogenetic implications.</title>
        <authorList>
            <person name="Goremykin V.V."/>
            <person name="Holland B."/>
            <person name="Hirsch-Ernst K.I."/>
            <person name="Hellwig F.H."/>
        </authorList>
    </citation>
    <scope>NUCLEOTIDE SEQUENCE [LARGE SCALE GENOMIC DNA]</scope>
</reference>
<comment type="function">
    <text evidence="1">Binds to 23S rRNA.</text>
</comment>
<comment type="subunit">
    <text evidence="1">Part of the 50S ribosomal subunit.</text>
</comment>
<comment type="subcellular location">
    <subcellularLocation>
        <location>Plastid</location>
        <location>Chloroplast</location>
    </subcellularLocation>
</comment>
<comment type="similarity">
    <text evidence="1">Belongs to the universal ribosomal protein uL14 family.</text>
</comment>
<proteinExistence type="inferred from homology"/>